<accession>P75565</accession>
<sequence>MVELDGKFATKADLKRVEDKVDVLFELQKTQGEQIKVQGKQIEQLTETVQKQGEQIKELQVQVKAQGEEIKEIKVEQKAQGQTLQLILKALEGINKRLDNLESK</sequence>
<feature type="chain" id="PRO_0000221595" description="UPF0134 protein MPN_104">
    <location>
        <begin position="1"/>
        <end position="104"/>
    </location>
</feature>
<proteinExistence type="inferred from homology"/>
<evidence type="ECO:0000305" key="1"/>
<name>Y104_MYCPN</name>
<reference key="1">
    <citation type="journal article" date="1996" name="Nucleic Acids Res.">
        <title>Complete sequence analysis of the genome of the bacterium Mycoplasma pneumoniae.</title>
        <authorList>
            <person name="Himmelreich R."/>
            <person name="Hilbert H."/>
            <person name="Plagens H."/>
            <person name="Pirkl E."/>
            <person name="Li B.-C."/>
            <person name="Herrmann R."/>
        </authorList>
    </citation>
    <scope>NUCLEOTIDE SEQUENCE [LARGE SCALE GENOMIC DNA]</scope>
    <source>
        <strain>ATCC 29342 / M129 / Subtype 1</strain>
    </source>
</reference>
<gene>
    <name type="ordered locus">MPN_104</name>
    <name type="ORF">C09_orf104</name>
    <name type="ORF">MP050</name>
</gene>
<keyword id="KW-1185">Reference proteome</keyword>
<organism>
    <name type="scientific">Mycoplasma pneumoniae (strain ATCC 29342 / M129 / Subtype 1)</name>
    <name type="common">Mycoplasmoides pneumoniae</name>
    <dbReference type="NCBI Taxonomy" id="272634"/>
    <lineage>
        <taxon>Bacteria</taxon>
        <taxon>Bacillati</taxon>
        <taxon>Mycoplasmatota</taxon>
        <taxon>Mycoplasmoidales</taxon>
        <taxon>Mycoplasmoidaceae</taxon>
        <taxon>Mycoplasmoides</taxon>
    </lineage>
</organism>
<dbReference type="EMBL" id="U00089">
    <property type="protein sequence ID" value="AAB95698.1"/>
    <property type="molecule type" value="Genomic_DNA"/>
</dbReference>
<dbReference type="PIR" id="S73376">
    <property type="entry name" value="S73376"/>
</dbReference>
<dbReference type="RefSeq" id="NP_109792.1">
    <property type="nucleotide sequence ID" value="NC_000912.1"/>
</dbReference>
<dbReference type="SMR" id="P75565"/>
<dbReference type="STRING" id="272634.MPN_104"/>
<dbReference type="EnsemblBacteria" id="AAB95698">
    <property type="protein sequence ID" value="AAB95698"/>
    <property type="gene ID" value="MPN_104"/>
</dbReference>
<dbReference type="KEGG" id="mpn:MPN_104"/>
<dbReference type="PATRIC" id="fig|272634.6.peg.110"/>
<dbReference type="HOGENOM" id="CLU_2247066_0_0_14"/>
<dbReference type="BioCyc" id="MPNE272634:G1GJ3-178-MONOMER"/>
<dbReference type="Proteomes" id="UP000000808">
    <property type="component" value="Chromosome"/>
</dbReference>
<dbReference type="Gene3D" id="6.10.250.40">
    <property type="match status" value="2"/>
</dbReference>
<dbReference type="InterPro" id="IPR002862">
    <property type="entry name" value="DUF16"/>
</dbReference>
<dbReference type="Pfam" id="PF01519">
    <property type="entry name" value="DUF16"/>
    <property type="match status" value="1"/>
</dbReference>
<dbReference type="SUPFAM" id="SSF144266">
    <property type="entry name" value="MPN010-like"/>
    <property type="match status" value="1"/>
</dbReference>
<comment type="similarity">
    <text evidence="1">Belongs to the UPF0134 family.</text>
</comment>
<protein>
    <recommendedName>
        <fullName>UPF0134 protein MPN_104</fullName>
    </recommendedName>
</protein>